<evidence type="ECO:0000255" key="1"/>
<evidence type="ECO:0000269" key="2">
    <source>
    </source>
</evidence>
<evidence type="ECO:0000269" key="3">
    <source>
    </source>
</evidence>
<evidence type="ECO:0000305" key="4"/>
<proteinExistence type="evidence at protein level"/>
<dbReference type="EC" id="2.4.-.-"/>
<dbReference type="EMBL" id="CU329670">
    <property type="protein sequence ID" value="CAA93694.1"/>
    <property type="molecule type" value="Genomic_DNA"/>
</dbReference>
<dbReference type="EMBL" id="AB027932">
    <property type="protein sequence ID" value="BAA87236.1"/>
    <property type="molecule type" value="Genomic_DNA"/>
</dbReference>
<dbReference type="PIR" id="T37863">
    <property type="entry name" value="T37863"/>
</dbReference>
<dbReference type="RefSeq" id="NP_593734.1">
    <property type="nucleotide sequence ID" value="NM_001019165.2"/>
</dbReference>
<dbReference type="SMR" id="Q10323"/>
<dbReference type="BioGRID" id="278760">
    <property type="interactions" value="2"/>
</dbReference>
<dbReference type="STRING" id="284812.Q10323"/>
<dbReference type="CAZy" id="GT32">
    <property type="family name" value="Glycosyltransferase Family 32"/>
</dbReference>
<dbReference type="iPTMnet" id="Q10323"/>
<dbReference type="PaxDb" id="4896-SPAC17G8.11c.1"/>
<dbReference type="EnsemblFungi" id="SPAC17G8.11c.1">
    <property type="protein sequence ID" value="SPAC17G8.11c.1:pep"/>
    <property type="gene ID" value="SPAC17G8.11c"/>
</dbReference>
<dbReference type="PomBase" id="SPAC17G8.11c"/>
<dbReference type="VEuPathDB" id="FungiDB:SPAC17G8.11c"/>
<dbReference type="eggNOG" id="ENOG502QS3D">
    <property type="taxonomic scope" value="Eukaryota"/>
</dbReference>
<dbReference type="HOGENOM" id="CLU_036369_3_0_1"/>
<dbReference type="InParanoid" id="Q10323"/>
<dbReference type="OMA" id="ASSWHGW"/>
<dbReference type="PhylomeDB" id="Q10323"/>
<dbReference type="PRO" id="PR:Q10323"/>
<dbReference type="Proteomes" id="UP000002485">
    <property type="component" value="Chromosome I"/>
</dbReference>
<dbReference type="GO" id="GO:0033106">
    <property type="term" value="C:cis-Golgi network membrane"/>
    <property type="evidence" value="ECO:0000314"/>
    <property type="project" value="PomBase"/>
</dbReference>
<dbReference type="GO" id="GO:0005783">
    <property type="term" value="C:endoplasmic reticulum"/>
    <property type="evidence" value="ECO:0007005"/>
    <property type="project" value="PomBase"/>
</dbReference>
<dbReference type="GO" id="GO:0005789">
    <property type="term" value="C:endoplasmic reticulum membrane"/>
    <property type="evidence" value="ECO:0007669"/>
    <property type="project" value="UniProtKB-SubCell"/>
</dbReference>
<dbReference type="GO" id="GO:0005794">
    <property type="term" value="C:Golgi apparatus"/>
    <property type="evidence" value="ECO:0007005"/>
    <property type="project" value="PomBase"/>
</dbReference>
<dbReference type="GO" id="GO:0005802">
    <property type="term" value="C:trans-Golgi network"/>
    <property type="evidence" value="ECO:0000314"/>
    <property type="project" value="PomBase"/>
</dbReference>
<dbReference type="GO" id="GO:0032588">
    <property type="term" value="C:trans-Golgi network membrane"/>
    <property type="evidence" value="ECO:0000314"/>
    <property type="project" value="PomBase"/>
</dbReference>
<dbReference type="GO" id="GO:0000030">
    <property type="term" value="F:mannosyltransferase activity"/>
    <property type="evidence" value="ECO:0000318"/>
    <property type="project" value="GO_Central"/>
</dbReference>
<dbReference type="GO" id="GO:0051999">
    <property type="term" value="P:mannosyl-inositol phosphorylceramide biosynthetic process"/>
    <property type="evidence" value="ECO:0000315"/>
    <property type="project" value="PomBase"/>
</dbReference>
<dbReference type="FunFam" id="3.90.550.20:FF:000001">
    <property type="entry name" value="MIPC synthase subunit (SurA)"/>
    <property type="match status" value="1"/>
</dbReference>
<dbReference type="Gene3D" id="3.90.550.20">
    <property type="match status" value="1"/>
</dbReference>
<dbReference type="InterPro" id="IPR051706">
    <property type="entry name" value="Glycosyltransferase_domain"/>
</dbReference>
<dbReference type="InterPro" id="IPR007577">
    <property type="entry name" value="GlycoTrfase_DXD_sugar-bd_CS"/>
</dbReference>
<dbReference type="InterPro" id="IPR029044">
    <property type="entry name" value="Nucleotide-diphossugar_trans"/>
</dbReference>
<dbReference type="PANTHER" id="PTHR32385">
    <property type="entry name" value="MANNOSYL PHOSPHORYLINOSITOL CERAMIDE SYNTHASE"/>
    <property type="match status" value="1"/>
</dbReference>
<dbReference type="PANTHER" id="PTHR32385:SF20">
    <property type="entry name" value="MANNOSYL PHOSPHORYLINOSITOL CERAMIDE SYNTHASE CSH1-RELATED"/>
    <property type="match status" value="1"/>
</dbReference>
<dbReference type="Pfam" id="PF04488">
    <property type="entry name" value="Gly_transf_sug"/>
    <property type="match status" value="1"/>
</dbReference>
<dbReference type="SUPFAM" id="SSF53448">
    <property type="entry name" value="Nucleotide-diphospho-sugar transferases"/>
    <property type="match status" value="1"/>
</dbReference>
<name>IMT3_SCHPO</name>
<gene>
    <name type="ORF">SPAC17G8.11c</name>
</gene>
<keyword id="KW-0256">Endoplasmic reticulum</keyword>
<keyword id="KW-0325">Glycoprotein</keyword>
<keyword id="KW-0328">Glycosyltransferase</keyword>
<keyword id="KW-0333">Golgi apparatus</keyword>
<keyword id="KW-0472">Membrane</keyword>
<keyword id="KW-0597">Phosphoprotein</keyword>
<keyword id="KW-1185">Reference proteome</keyword>
<keyword id="KW-0808">Transferase</keyword>
<keyword id="KW-0812">Transmembrane</keyword>
<keyword id="KW-1133">Transmembrane helix</keyword>
<reference key="1">
    <citation type="journal article" date="2002" name="Nature">
        <title>The genome sequence of Schizosaccharomyces pombe.</title>
        <authorList>
            <person name="Wood V."/>
            <person name="Gwilliam R."/>
            <person name="Rajandream M.A."/>
            <person name="Lyne M.H."/>
            <person name="Lyne R."/>
            <person name="Stewart A."/>
            <person name="Sgouros J.G."/>
            <person name="Peat N."/>
            <person name="Hayles J."/>
            <person name="Baker S.G."/>
            <person name="Basham D."/>
            <person name="Bowman S."/>
            <person name="Brooks K."/>
            <person name="Brown D."/>
            <person name="Brown S."/>
            <person name="Chillingworth T."/>
            <person name="Churcher C.M."/>
            <person name="Collins M."/>
            <person name="Connor R."/>
            <person name="Cronin A."/>
            <person name="Davis P."/>
            <person name="Feltwell T."/>
            <person name="Fraser A."/>
            <person name="Gentles S."/>
            <person name="Goble A."/>
            <person name="Hamlin N."/>
            <person name="Harris D.E."/>
            <person name="Hidalgo J."/>
            <person name="Hodgson G."/>
            <person name="Holroyd S."/>
            <person name="Hornsby T."/>
            <person name="Howarth S."/>
            <person name="Huckle E.J."/>
            <person name="Hunt S."/>
            <person name="Jagels K."/>
            <person name="James K.D."/>
            <person name="Jones L."/>
            <person name="Jones M."/>
            <person name="Leather S."/>
            <person name="McDonald S."/>
            <person name="McLean J."/>
            <person name="Mooney P."/>
            <person name="Moule S."/>
            <person name="Mungall K.L."/>
            <person name="Murphy L.D."/>
            <person name="Niblett D."/>
            <person name="Odell C."/>
            <person name="Oliver K."/>
            <person name="O'Neil S."/>
            <person name="Pearson D."/>
            <person name="Quail M.A."/>
            <person name="Rabbinowitsch E."/>
            <person name="Rutherford K.M."/>
            <person name="Rutter S."/>
            <person name="Saunders D."/>
            <person name="Seeger K."/>
            <person name="Sharp S."/>
            <person name="Skelton J."/>
            <person name="Simmonds M.N."/>
            <person name="Squares R."/>
            <person name="Squares S."/>
            <person name="Stevens K."/>
            <person name="Taylor K."/>
            <person name="Taylor R.G."/>
            <person name="Tivey A."/>
            <person name="Walsh S.V."/>
            <person name="Warren T."/>
            <person name="Whitehead S."/>
            <person name="Woodward J.R."/>
            <person name="Volckaert G."/>
            <person name="Aert R."/>
            <person name="Robben J."/>
            <person name="Grymonprez B."/>
            <person name="Weltjens I."/>
            <person name="Vanstreels E."/>
            <person name="Rieger M."/>
            <person name="Schaefer M."/>
            <person name="Mueller-Auer S."/>
            <person name="Gabel C."/>
            <person name="Fuchs M."/>
            <person name="Duesterhoeft A."/>
            <person name="Fritzc C."/>
            <person name="Holzer E."/>
            <person name="Moestl D."/>
            <person name="Hilbert H."/>
            <person name="Borzym K."/>
            <person name="Langer I."/>
            <person name="Beck A."/>
            <person name="Lehrach H."/>
            <person name="Reinhardt R."/>
            <person name="Pohl T.M."/>
            <person name="Eger P."/>
            <person name="Zimmermann W."/>
            <person name="Wedler H."/>
            <person name="Wambutt R."/>
            <person name="Purnelle B."/>
            <person name="Goffeau A."/>
            <person name="Cadieu E."/>
            <person name="Dreano S."/>
            <person name="Gloux S."/>
            <person name="Lelaure V."/>
            <person name="Mottier S."/>
            <person name="Galibert F."/>
            <person name="Aves S.J."/>
            <person name="Xiang Z."/>
            <person name="Hunt C."/>
            <person name="Moore K."/>
            <person name="Hurst S.M."/>
            <person name="Lucas M."/>
            <person name="Rochet M."/>
            <person name="Gaillardin C."/>
            <person name="Tallada V.A."/>
            <person name="Garzon A."/>
            <person name="Thode G."/>
            <person name="Daga R.R."/>
            <person name="Cruzado L."/>
            <person name="Jimenez J."/>
            <person name="Sanchez M."/>
            <person name="del Rey F."/>
            <person name="Benito J."/>
            <person name="Dominguez A."/>
            <person name="Revuelta J.L."/>
            <person name="Moreno S."/>
            <person name="Armstrong J."/>
            <person name="Forsburg S.L."/>
            <person name="Cerutti L."/>
            <person name="Lowe T."/>
            <person name="McCombie W.R."/>
            <person name="Paulsen I."/>
            <person name="Potashkin J."/>
            <person name="Shpakovski G.V."/>
            <person name="Ussery D."/>
            <person name="Barrell B.G."/>
            <person name="Nurse P."/>
        </authorList>
    </citation>
    <scope>NUCLEOTIDE SEQUENCE [LARGE SCALE GENOMIC DNA]</scope>
    <source>
        <strain>972 / ATCC 24843</strain>
    </source>
</reference>
<reference key="2">
    <citation type="journal article" date="2000" name="Genes Cells">
        <title>Large-scale screening of intracellular protein localization in living fission yeast cells by the use of a GFP-fusion genomic DNA library.</title>
        <authorList>
            <person name="Ding D.-Q."/>
            <person name="Tomita Y."/>
            <person name="Yamamoto A."/>
            <person name="Chikashige Y."/>
            <person name="Haraguchi T."/>
            <person name="Hiraoka Y."/>
        </authorList>
    </citation>
    <scope>NUCLEOTIDE SEQUENCE [LARGE SCALE GENOMIC DNA] OF 1-83</scope>
    <scope>SUBCELLULAR LOCATION</scope>
    <source>
        <strain>ATCC 38364 / 968</strain>
    </source>
</reference>
<reference key="3">
    <citation type="journal article" date="2006" name="Nat. Biotechnol.">
        <title>ORFeome cloning and global analysis of protein localization in the fission yeast Schizosaccharomyces pombe.</title>
        <authorList>
            <person name="Matsuyama A."/>
            <person name="Arai R."/>
            <person name="Yashiroda Y."/>
            <person name="Shirai A."/>
            <person name="Kamata A."/>
            <person name="Sekido S."/>
            <person name="Kobayashi Y."/>
            <person name="Hashimoto A."/>
            <person name="Hamamoto M."/>
            <person name="Hiraoka Y."/>
            <person name="Horinouchi S."/>
            <person name="Yoshida M."/>
        </authorList>
    </citation>
    <scope>SUBCELLULAR LOCATION [LARGE SCALE ANALYSIS]</scope>
</reference>
<reference key="4">
    <citation type="journal article" date="2008" name="J. Proteome Res.">
        <title>Phosphoproteome analysis of fission yeast.</title>
        <authorList>
            <person name="Wilson-Grady J.T."/>
            <person name="Villen J."/>
            <person name="Gygi S.P."/>
        </authorList>
    </citation>
    <scope>PHOSPHORYLATION [LARGE SCALE ANALYSIS] AT SER-307; SER-353 AND SER-355</scope>
    <scope>IDENTIFICATION BY MASS SPECTROMETRY</scope>
</reference>
<reference key="5">
    <citation type="journal article" date="2010" name="J. Cell Sci.">
        <title>Mannosylinositol phosphorylceramide is a major sphingolipid component and is required for proper localization of plasma-membrane proteins in Schizosaccharomyces pombe.</title>
        <authorList>
            <person name="Nakase M."/>
            <person name="Tani M."/>
            <person name="Morita T."/>
            <person name="Kitamoto H.K."/>
            <person name="Kashiwazaki J."/>
            <person name="Nakamura T."/>
            <person name="Hosomi A."/>
            <person name="Tanaka N."/>
            <person name="Takegawa K."/>
        </authorList>
    </citation>
    <scope>SUBCELLULAR LOCATION</scope>
    <scope>FUNCTION</scope>
</reference>
<sequence>MNKILFYFFFFLTLILSATVYLFGGPMMLFFINYKTDLLKVDDVYNHEIYSNQSAAIPKIIHQTWKTNEIPEKWVGAQKSCIDLHPDYEYVLWTDESMREFIATDYPWFLTQYDSYPYNIERADVVRYFILYKYGGIYLDLDVGCNRTLDPLLHYPAWVRRTSPSGISNNVMGFAKGHPFLLQVVRNLPRFAFNYHFPYLTVMYSTGPLFLSIIWSAWRKLPDAEAWHHIWVMVPELYEKSHHAFFEIYEGSSWHDSDAGFVFYMLHHWAIFTFLGFLTFFIVVYFIFGYALKPAARVSRTGRRVFSSPFSKTSPSRWKIFHRFTSSNEKYDQTRSDSLPFMSDYDLESQTQSHSP</sequence>
<organism>
    <name type="scientific">Schizosaccharomyces pombe (strain 972 / ATCC 24843)</name>
    <name type="common">Fission yeast</name>
    <dbReference type="NCBI Taxonomy" id="284812"/>
    <lineage>
        <taxon>Eukaryota</taxon>
        <taxon>Fungi</taxon>
        <taxon>Dikarya</taxon>
        <taxon>Ascomycota</taxon>
        <taxon>Taphrinomycotina</taxon>
        <taxon>Schizosaccharomycetes</taxon>
        <taxon>Schizosaccharomycetales</taxon>
        <taxon>Schizosaccharomycetaceae</taxon>
        <taxon>Schizosaccharomyces</taxon>
    </lineage>
</organism>
<comment type="function">
    <text evidence="3">With imt1 and imt2, is required for the synthesis of mannosylinositol phosphoceramide (MIPC). Catalyzes the addition of mannosyl to inositol phosphoceramide (IPC). MIPC is essential for cell morphology, cell-surface distribution of ergosterol, localization for plasma-membrane transporters, and lipid-raft-mediated endocytosis of plasma membrane proteins to the vacuole.</text>
</comment>
<comment type="subcellular location">
    <subcellularLocation>
        <location>Endoplasmic reticulum membrane</location>
        <topology>Multi-pass membrane protein</topology>
    </subcellularLocation>
    <subcellularLocation>
        <location>Golgi apparatus</location>
        <location>cis-Golgi network membrane</location>
        <topology>Multi-pass membrane protein</topology>
    </subcellularLocation>
    <subcellularLocation>
        <location>Golgi apparatus</location>
        <location>trans-Golgi network membrane</location>
        <topology>Multi-pass membrane protein</topology>
    </subcellularLocation>
</comment>
<comment type="similarity">
    <text evidence="4">Belongs to the glycosyltransferase 32 family.</text>
</comment>
<protein>
    <recommendedName>
        <fullName>Inositol phosphoceramide mannosyltransferase 3</fullName>
        <ecNumber>2.4.-.-</ecNumber>
    </recommendedName>
    <alternativeName>
        <fullName>IPC mannosyltransferase 3</fullName>
    </alternativeName>
</protein>
<feature type="chain" id="PRO_0000116591" description="Inositol phosphoceramide mannosyltransferase 3">
    <location>
        <begin position="1"/>
        <end position="356"/>
    </location>
</feature>
<feature type="transmembrane region" description="Helical" evidence="1">
    <location>
        <begin position="4"/>
        <end position="24"/>
    </location>
</feature>
<feature type="transmembrane region" description="Helical" evidence="1">
    <location>
        <begin position="197"/>
        <end position="217"/>
    </location>
</feature>
<feature type="transmembrane region" description="Helical" evidence="1">
    <location>
        <begin position="269"/>
        <end position="289"/>
    </location>
</feature>
<feature type="modified residue" description="Phosphoserine" evidence="2">
    <location>
        <position position="307"/>
    </location>
</feature>
<feature type="modified residue" description="Phosphoserine" evidence="2">
    <location>
        <position position="353"/>
    </location>
</feature>
<feature type="modified residue" description="Phosphoserine" evidence="2">
    <location>
        <position position="355"/>
    </location>
</feature>
<feature type="glycosylation site" description="N-linked (GlcNAc...) asparagine" evidence="1">
    <location>
        <position position="52"/>
    </location>
</feature>
<feature type="glycosylation site" description="N-linked (GlcNAc...) asparagine" evidence="1">
    <location>
        <position position="146"/>
    </location>
</feature>
<accession>Q10323</accession>
<accession>Q9US96</accession>